<comment type="function">
    <text evidence="1">Catalyzes the conversion of glucosamine-6-phosphate to glucosamine-1-phosphate.</text>
</comment>
<comment type="catalytic activity">
    <reaction evidence="1">
        <text>alpha-D-glucosamine 1-phosphate = D-glucosamine 6-phosphate</text>
        <dbReference type="Rhea" id="RHEA:23424"/>
        <dbReference type="ChEBI" id="CHEBI:58516"/>
        <dbReference type="ChEBI" id="CHEBI:58725"/>
        <dbReference type="EC" id="5.4.2.10"/>
    </reaction>
</comment>
<comment type="cofactor">
    <cofactor evidence="1">
        <name>Mg(2+)</name>
        <dbReference type="ChEBI" id="CHEBI:18420"/>
    </cofactor>
    <text evidence="1">Binds 1 Mg(2+) ion per subunit.</text>
</comment>
<comment type="PTM">
    <text evidence="1">Activated by phosphorylation.</text>
</comment>
<comment type="similarity">
    <text evidence="1">Belongs to the phosphohexose mutase family.</text>
</comment>
<name>GLMM_LIMF3</name>
<gene>
    <name evidence="1" type="primary">glmM</name>
    <name type="ordered locus">LAF_0381</name>
</gene>
<reference key="1">
    <citation type="journal article" date="2008" name="DNA Res.">
        <title>Comparative genome analysis of Lactobacillus reuteri and Lactobacillus fermentum reveal a genomic island for reuterin and cobalamin production.</title>
        <authorList>
            <person name="Morita H."/>
            <person name="Toh H."/>
            <person name="Fukuda S."/>
            <person name="Horikawa H."/>
            <person name="Oshima K."/>
            <person name="Suzuki T."/>
            <person name="Murakami M."/>
            <person name="Hisamatsu S."/>
            <person name="Kato Y."/>
            <person name="Takizawa T."/>
            <person name="Fukuoka H."/>
            <person name="Yoshimura T."/>
            <person name="Itoh K."/>
            <person name="O'Sullivan D.J."/>
            <person name="McKay L.L."/>
            <person name="Ohno H."/>
            <person name="Kikuchi J."/>
            <person name="Masaoka T."/>
            <person name="Hattori M."/>
        </authorList>
    </citation>
    <scope>NUCLEOTIDE SEQUENCE [LARGE SCALE GENOMIC DNA]</scope>
    <source>
        <strain>NBRC 3956 / LMG 18251</strain>
    </source>
</reference>
<proteinExistence type="inferred from homology"/>
<evidence type="ECO:0000255" key="1">
    <source>
        <dbReference type="HAMAP-Rule" id="MF_01554"/>
    </source>
</evidence>
<protein>
    <recommendedName>
        <fullName evidence="1">Phosphoglucosamine mutase</fullName>
        <ecNumber evidence="1">5.4.2.10</ecNumber>
    </recommendedName>
</protein>
<dbReference type="EC" id="5.4.2.10" evidence="1"/>
<dbReference type="EMBL" id="AP008937">
    <property type="protein sequence ID" value="BAG26717.1"/>
    <property type="molecule type" value="Genomic_DNA"/>
</dbReference>
<dbReference type="RefSeq" id="WP_012390883.1">
    <property type="nucleotide sequence ID" value="NC_010610.1"/>
</dbReference>
<dbReference type="SMR" id="B2GAN5"/>
<dbReference type="KEGG" id="lfe:LAF_0381"/>
<dbReference type="PATRIC" id="fig|334390.5.peg.414"/>
<dbReference type="eggNOG" id="COG1109">
    <property type="taxonomic scope" value="Bacteria"/>
</dbReference>
<dbReference type="HOGENOM" id="CLU_016950_7_0_9"/>
<dbReference type="Proteomes" id="UP000001697">
    <property type="component" value="Chromosome"/>
</dbReference>
<dbReference type="GO" id="GO:0005829">
    <property type="term" value="C:cytosol"/>
    <property type="evidence" value="ECO:0007669"/>
    <property type="project" value="TreeGrafter"/>
</dbReference>
<dbReference type="GO" id="GO:0000287">
    <property type="term" value="F:magnesium ion binding"/>
    <property type="evidence" value="ECO:0007669"/>
    <property type="project" value="UniProtKB-UniRule"/>
</dbReference>
<dbReference type="GO" id="GO:0008966">
    <property type="term" value="F:phosphoglucosamine mutase activity"/>
    <property type="evidence" value="ECO:0007669"/>
    <property type="project" value="UniProtKB-UniRule"/>
</dbReference>
<dbReference type="GO" id="GO:0004615">
    <property type="term" value="F:phosphomannomutase activity"/>
    <property type="evidence" value="ECO:0007669"/>
    <property type="project" value="TreeGrafter"/>
</dbReference>
<dbReference type="GO" id="GO:0005975">
    <property type="term" value="P:carbohydrate metabolic process"/>
    <property type="evidence" value="ECO:0007669"/>
    <property type="project" value="InterPro"/>
</dbReference>
<dbReference type="GO" id="GO:0009252">
    <property type="term" value="P:peptidoglycan biosynthetic process"/>
    <property type="evidence" value="ECO:0007669"/>
    <property type="project" value="TreeGrafter"/>
</dbReference>
<dbReference type="GO" id="GO:0006048">
    <property type="term" value="P:UDP-N-acetylglucosamine biosynthetic process"/>
    <property type="evidence" value="ECO:0007669"/>
    <property type="project" value="TreeGrafter"/>
</dbReference>
<dbReference type="CDD" id="cd05802">
    <property type="entry name" value="GlmM"/>
    <property type="match status" value="1"/>
</dbReference>
<dbReference type="FunFam" id="3.30.310.50:FF:000001">
    <property type="entry name" value="Phosphoglucosamine mutase"/>
    <property type="match status" value="1"/>
</dbReference>
<dbReference type="FunFam" id="3.40.120.10:FF:000001">
    <property type="entry name" value="Phosphoglucosamine mutase"/>
    <property type="match status" value="1"/>
</dbReference>
<dbReference type="FunFam" id="3.40.120.10:FF:000002">
    <property type="entry name" value="Phosphoglucosamine mutase"/>
    <property type="match status" value="1"/>
</dbReference>
<dbReference type="Gene3D" id="3.40.120.10">
    <property type="entry name" value="Alpha-D-Glucose-1,6-Bisphosphate, subunit A, domain 3"/>
    <property type="match status" value="3"/>
</dbReference>
<dbReference type="Gene3D" id="3.30.310.50">
    <property type="entry name" value="Alpha-D-phosphohexomutase, C-terminal domain"/>
    <property type="match status" value="1"/>
</dbReference>
<dbReference type="HAMAP" id="MF_01554_B">
    <property type="entry name" value="GlmM_B"/>
    <property type="match status" value="1"/>
</dbReference>
<dbReference type="InterPro" id="IPR005844">
    <property type="entry name" value="A-D-PHexomutase_a/b/a-I"/>
</dbReference>
<dbReference type="InterPro" id="IPR016055">
    <property type="entry name" value="A-D-PHexomutase_a/b/a-I/II/III"/>
</dbReference>
<dbReference type="InterPro" id="IPR005845">
    <property type="entry name" value="A-D-PHexomutase_a/b/a-II"/>
</dbReference>
<dbReference type="InterPro" id="IPR005846">
    <property type="entry name" value="A-D-PHexomutase_a/b/a-III"/>
</dbReference>
<dbReference type="InterPro" id="IPR005843">
    <property type="entry name" value="A-D-PHexomutase_C"/>
</dbReference>
<dbReference type="InterPro" id="IPR036900">
    <property type="entry name" value="A-D-PHexomutase_C_sf"/>
</dbReference>
<dbReference type="InterPro" id="IPR016066">
    <property type="entry name" value="A-D-PHexomutase_CS"/>
</dbReference>
<dbReference type="InterPro" id="IPR005841">
    <property type="entry name" value="Alpha-D-phosphohexomutase_SF"/>
</dbReference>
<dbReference type="InterPro" id="IPR006352">
    <property type="entry name" value="GlmM_bact"/>
</dbReference>
<dbReference type="InterPro" id="IPR050060">
    <property type="entry name" value="Phosphoglucosamine_mutase"/>
</dbReference>
<dbReference type="NCBIfam" id="TIGR01455">
    <property type="entry name" value="glmM"/>
    <property type="match status" value="1"/>
</dbReference>
<dbReference type="NCBIfam" id="NF008139">
    <property type="entry name" value="PRK10887.1"/>
    <property type="match status" value="1"/>
</dbReference>
<dbReference type="PANTHER" id="PTHR42946:SF1">
    <property type="entry name" value="PHOSPHOGLUCOMUTASE (ALPHA-D-GLUCOSE-1,6-BISPHOSPHATE-DEPENDENT)"/>
    <property type="match status" value="1"/>
</dbReference>
<dbReference type="PANTHER" id="PTHR42946">
    <property type="entry name" value="PHOSPHOHEXOSE MUTASE"/>
    <property type="match status" value="1"/>
</dbReference>
<dbReference type="Pfam" id="PF02878">
    <property type="entry name" value="PGM_PMM_I"/>
    <property type="match status" value="1"/>
</dbReference>
<dbReference type="Pfam" id="PF02879">
    <property type="entry name" value="PGM_PMM_II"/>
    <property type="match status" value="1"/>
</dbReference>
<dbReference type="Pfam" id="PF02880">
    <property type="entry name" value="PGM_PMM_III"/>
    <property type="match status" value="1"/>
</dbReference>
<dbReference type="Pfam" id="PF00408">
    <property type="entry name" value="PGM_PMM_IV"/>
    <property type="match status" value="1"/>
</dbReference>
<dbReference type="PRINTS" id="PR00509">
    <property type="entry name" value="PGMPMM"/>
</dbReference>
<dbReference type="SUPFAM" id="SSF55957">
    <property type="entry name" value="Phosphoglucomutase, C-terminal domain"/>
    <property type="match status" value="1"/>
</dbReference>
<dbReference type="SUPFAM" id="SSF53738">
    <property type="entry name" value="Phosphoglucomutase, first 3 domains"/>
    <property type="match status" value="3"/>
</dbReference>
<dbReference type="PROSITE" id="PS00710">
    <property type="entry name" value="PGM_PMM"/>
    <property type="match status" value="1"/>
</dbReference>
<feature type="chain" id="PRO_1000201113" description="Phosphoglucosamine mutase">
    <location>
        <begin position="1"/>
        <end position="452"/>
    </location>
</feature>
<feature type="active site" description="Phosphoserine intermediate" evidence="1">
    <location>
        <position position="103"/>
    </location>
</feature>
<feature type="binding site" description="via phosphate group" evidence="1">
    <location>
        <position position="103"/>
    </location>
    <ligand>
        <name>Mg(2+)</name>
        <dbReference type="ChEBI" id="CHEBI:18420"/>
    </ligand>
</feature>
<feature type="binding site" evidence="1">
    <location>
        <position position="243"/>
    </location>
    <ligand>
        <name>Mg(2+)</name>
        <dbReference type="ChEBI" id="CHEBI:18420"/>
    </ligand>
</feature>
<feature type="binding site" evidence="1">
    <location>
        <position position="245"/>
    </location>
    <ligand>
        <name>Mg(2+)</name>
        <dbReference type="ChEBI" id="CHEBI:18420"/>
    </ligand>
</feature>
<feature type="binding site" evidence="1">
    <location>
        <position position="247"/>
    </location>
    <ligand>
        <name>Mg(2+)</name>
        <dbReference type="ChEBI" id="CHEBI:18420"/>
    </ligand>
</feature>
<feature type="modified residue" description="Phosphoserine" evidence="1">
    <location>
        <position position="103"/>
    </location>
</feature>
<organism>
    <name type="scientific">Limosilactobacillus fermentum (strain NBRC 3956 / LMG 18251)</name>
    <name type="common">Lactobacillus fermentum</name>
    <dbReference type="NCBI Taxonomy" id="334390"/>
    <lineage>
        <taxon>Bacteria</taxon>
        <taxon>Bacillati</taxon>
        <taxon>Bacillota</taxon>
        <taxon>Bacilli</taxon>
        <taxon>Lactobacillales</taxon>
        <taxon>Lactobacillaceae</taxon>
        <taxon>Limosilactobacillus</taxon>
    </lineage>
</organism>
<sequence length="452" mass="48833">MKLKYFGTDGVRGVANRDLSPELAFRVGRAGGYVLTRHSQRKRPQVLVSRDTRISGEMLENALVAGLLSVGIEVFRLGVVTTPGVAYLVRAQEADAGVMITASHNPIQYNGIKYFGGDGFKLSDELEYEIEQLLDAEEDILPRPSDDGLGTVEDYREGALKYTSFLEQTISTDLDGLKVVIDGANGATSSFIANLFADVNADFIPLHVSPNGLNTNLNCGSTHPADLQKAVVENQADLGIAFDGDGDRCIAVDNEGNLVDGDKIMYICGKSMEANGRLKKDTVVTTVMSNLGMYKALESHGMKSVKTKVGDRYVVEEMLKNGYNLGGEQSGHIIFLDHNTTGDGMLTALQLLQVVKTSGKSLKELAADVVTYPQELVNITVEDKEAALNNQELKNAIAKVEEKMAGDGRILVRPSGTEPLLRIMAEAPTKELVHAYVSQIADVARQVLPGAK</sequence>
<accession>B2GAN5</accession>
<keyword id="KW-0413">Isomerase</keyword>
<keyword id="KW-0460">Magnesium</keyword>
<keyword id="KW-0479">Metal-binding</keyword>
<keyword id="KW-0597">Phosphoprotein</keyword>
<keyword id="KW-1185">Reference proteome</keyword>